<feature type="chain" id="PRO_0000186426" description="Dihydrofolate reductase type 8">
    <location>
        <begin position="1"/>
        <end position="169"/>
    </location>
</feature>
<feature type="domain" description="DHFR" evidence="2">
    <location>
        <begin position="3"/>
        <end position="169"/>
    </location>
</feature>
<reference key="1">
    <citation type="journal article" date="1995" name="Antimicrob. Agents Chemother.">
        <title>Sequence identity with type VIII and association with IS176 of type IIIc dihydrofolate reductase from Shigella sonnei.</title>
        <authorList>
            <person name="Barg N.L."/>
            <person name="Register S."/>
            <person name="Thomson C."/>
            <person name="Amyes S."/>
        </authorList>
    </citation>
    <scope>NUCLEOTIDE SEQUENCE [GENOMIC DNA]</scope>
</reference>
<accession>P0ABQ8</accession>
<accession>Q57452</accession>
<geneLocation type="plasmid">
    <name>pBH700</name>
</geneLocation>
<protein>
    <recommendedName>
        <fullName>Dihydrofolate reductase type 8</fullName>
        <ecNumber>1.5.1.3</ecNumber>
    </recommendedName>
    <alternativeName>
        <fullName>DHFR type IIIC</fullName>
    </alternativeName>
    <alternativeName>
        <fullName>Dihydrofolate reductase type VIII</fullName>
    </alternativeName>
</protein>
<dbReference type="EC" id="1.5.1.3"/>
<dbReference type="EMBL" id="U09273">
    <property type="protein sequence ID" value="AAA79232.1"/>
    <property type="molecule type" value="Genomic_DNA"/>
</dbReference>
<dbReference type="SMR" id="P0ABQ8"/>
<dbReference type="CARD" id="ARO:3002863">
    <property type="molecule name" value="dfrA8"/>
    <property type="mechanism identifier" value="ARO:0001002"/>
    <property type="mechanism name" value="antibiotic target replacement"/>
</dbReference>
<dbReference type="UniPathway" id="UPA00077">
    <property type="reaction ID" value="UER00158"/>
</dbReference>
<dbReference type="GO" id="GO:0005829">
    <property type="term" value="C:cytosol"/>
    <property type="evidence" value="ECO:0007669"/>
    <property type="project" value="TreeGrafter"/>
</dbReference>
<dbReference type="GO" id="GO:0004146">
    <property type="term" value="F:dihydrofolate reductase activity"/>
    <property type="evidence" value="ECO:0007669"/>
    <property type="project" value="UniProtKB-EC"/>
</dbReference>
<dbReference type="GO" id="GO:0050661">
    <property type="term" value="F:NADP binding"/>
    <property type="evidence" value="ECO:0007669"/>
    <property type="project" value="InterPro"/>
</dbReference>
<dbReference type="GO" id="GO:0046452">
    <property type="term" value="P:dihydrofolate metabolic process"/>
    <property type="evidence" value="ECO:0007669"/>
    <property type="project" value="TreeGrafter"/>
</dbReference>
<dbReference type="GO" id="GO:0046655">
    <property type="term" value="P:folic acid metabolic process"/>
    <property type="evidence" value="ECO:0007669"/>
    <property type="project" value="TreeGrafter"/>
</dbReference>
<dbReference type="GO" id="GO:0006730">
    <property type="term" value="P:one-carbon metabolic process"/>
    <property type="evidence" value="ECO:0007669"/>
    <property type="project" value="UniProtKB-KW"/>
</dbReference>
<dbReference type="GO" id="GO:0046677">
    <property type="term" value="P:response to antibiotic"/>
    <property type="evidence" value="ECO:0007669"/>
    <property type="project" value="UniProtKB-KW"/>
</dbReference>
<dbReference type="GO" id="GO:0031427">
    <property type="term" value="P:response to methotrexate"/>
    <property type="evidence" value="ECO:0007669"/>
    <property type="project" value="UniProtKB-KW"/>
</dbReference>
<dbReference type="GO" id="GO:0046654">
    <property type="term" value="P:tetrahydrofolate biosynthetic process"/>
    <property type="evidence" value="ECO:0007669"/>
    <property type="project" value="UniProtKB-UniPathway"/>
</dbReference>
<dbReference type="CDD" id="cd00209">
    <property type="entry name" value="DHFR"/>
    <property type="match status" value="1"/>
</dbReference>
<dbReference type="Gene3D" id="3.40.430.10">
    <property type="entry name" value="Dihydrofolate Reductase, subunit A"/>
    <property type="match status" value="1"/>
</dbReference>
<dbReference type="InterPro" id="IPR012259">
    <property type="entry name" value="DHFR"/>
</dbReference>
<dbReference type="InterPro" id="IPR024072">
    <property type="entry name" value="DHFR-like_dom_sf"/>
</dbReference>
<dbReference type="InterPro" id="IPR017925">
    <property type="entry name" value="DHFR_CS"/>
</dbReference>
<dbReference type="InterPro" id="IPR001796">
    <property type="entry name" value="DHFR_dom"/>
</dbReference>
<dbReference type="NCBIfam" id="NF000126">
    <property type="entry name" value="trim_DfrA8"/>
    <property type="match status" value="1"/>
</dbReference>
<dbReference type="PANTHER" id="PTHR48069">
    <property type="entry name" value="DIHYDROFOLATE REDUCTASE"/>
    <property type="match status" value="1"/>
</dbReference>
<dbReference type="PANTHER" id="PTHR48069:SF3">
    <property type="entry name" value="DIHYDROFOLATE REDUCTASE"/>
    <property type="match status" value="1"/>
</dbReference>
<dbReference type="Pfam" id="PF00186">
    <property type="entry name" value="DHFR_1"/>
    <property type="match status" value="1"/>
</dbReference>
<dbReference type="PRINTS" id="PR00070">
    <property type="entry name" value="DHFR"/>
</dbReference>
<dbReference type="SUPFAM" id="SSF53597">
    <property type="entry name" value="Dihydrofolate reductase-like"/>
    <property type="match status" value="1"/>
</dbReference>
<dbReference type="PROSITE" id="PS00075">
    <property type="entry name" value="DHFR_1"/>
    <property type="match status" value="1"/>
</dbReference>
<dbReference type="PROSITE" id="PS51330">
    <property type="entry name" value="DHFR_2"/>
    <property type="match status" value="1"/>
</dbReference>
<sequence>MIELHAILAATANGCIGKDNALPWPPLKGDLARFKKLTMGKVVIMGRKTYESLPVKLEGRTCIVMTRQALELPGVRDANGAIFVNNVSDAMRFAQEESVGDVAYVIGGAEIFKRLALMITQIELTFVKRLYEGDTYVDLAEMVKDYEQNGMEEHDLHTYFTYRKKELTE</sequence>
<gene>
    <name type="primary">dhfrVIII</name>
    <name type="synonym">dhfrIIIc</name>
</gene>
<evidence type="ECO:0000250" key="1"/>
<evidence type="ECO:0000255" key="2">
    <source>
        <dbReference type="PROSITE-ProRule" id="PRU00660"/>
    </source>
</evidence>
<evidence type="ECO:0000305" key="3"/>
<proteinExistence type="inferred from homology"/>
<comment type="function">
    <text evidence="1">Key enzyme in folate metabolism. Catalyzes an essential reaction for de novo glycine and purine synthesis, and for DNA precursor synthesis (By similarity).</text>
</comment>
<comment type="catalytic activity">
    <reaction evidence="2">
        <text>(6S)-5,6,7,8-tetrahydrofolate + NADP(+) = 7,8-dihydrofolate + NADPH + H(+)</text>
        <dbReference type="Rhea" id="RHEA:15009"/>
        <dbReference type="ChEBI" id="CHEBI:15378"/>
        <dbReference type="ChEBI" id="CHEBI:57451"/>
        <dbReference type="ChEBI" id="CHEBI:57453"/>
        <dbReference type="ChEBI" id="CHEBI:57783"/>
        <dbReference type="ChEBI" id="CHEBI:58349"/>
        <dbReference type="EC" id="1.5.1.3"/>
    </reaction>
</comment>
<comment type="pathway">
    <text>Cofactor biosynthesis; tetrahydrofolate biosynthesis; 5,6,7,8-tetrahydrofolate from 7,8-dihydrofolate: step 1/1.</text>
</comment>
<comment type="subunit">
    <text evidence="1">Homodimer.</text>
</comment>
<comment type="miscellaneous">
    <text>Confers high-level trimethoprim resistance.</text>
</comment>
<comment type="similarity">
    <text evidence="3">Belongs to the dihydrofolate reductase family.</text>
</comment>
<name>DYR8_SHISO</name>
<keyword id="KW-0046">Antibiotic resistance</keyword>
<keyword id="KW-0487">Methotrexate resistance</keyword>
<keyword id="KW-0521">NADP</keyword>
<keyword id="KW-0554">One-carbon metabolism</keyword>
<keyword id="KW-0560">Oxidoreductase</keyword>
<keyword id="KW-0614">Plasmid</keyword>
<keyword id="KW-0817">Trimethoprim resistance</keyword>
<organism>
    <name type="scientific">Shigella sonnei</name>
    <dbReference type="NCBI Taxonomy" id="624"/>
    <lineage>
        <taxon>Bacteria</taxon>
        <taxon>Pseudomonadati</taxon>
        <taxon>Pseudomonadota</taxon>
        <taxon>Gammaproteobacteria</taxon>
        <taxon>Enterobacterales</taxon>
        <taxon>Enterobacteriaceae</taxon>
        <taxon>Shigella</taxon>
    </lineage>
</organism>